<dbReference type="EMBL" id="AB188254">
    <property type="protein sequence ID" value="BAE45355.1"/>
    <property type="molecule type" value="mRNA"/>
</dbReference>
<dbReference type="EMBL" id="BX004971">
    <property type="protein sequence ID" value="CAP09368.1"/>
    <property type="molecule type" value="Genomic_DNA"/>
</dbReference>
<dbReference type="EMBL" id="BX511183">
    <property type="protein sequence ID" value="CAK04966.1"/>
    <property type="molecule type" value="Genomic_DNA"/>
</dbReference>
<dbReference type="EMBL" id="BC163023">
    <property type="protein sequence ID" value="AAI63023.1"/>
    <property type="molecule type" value="mRNA"/>
</dbReference>
<dbReference type="EMBL" id="BC163060">
    <property type="protein sequence ID" value="AAI63060.1"/>
    <property type="molecule type" value="mRNA"/>
</dbReference>
<dbReference type="EMBL" id="BC163073">
    <property type="protein sequence ID" value="AAI63073.1"/>
    <property type="molecule type" value="mRNA"/>
</dbReference>
<dbReference type="RefSeq" id="NP_001032320.2">
    <property type="nucleotide sequence ID" value="NM_001037243.2"/>
</dbReference>
<dbReference type="RefSeq" id="XP_017208628.1">
    <property type="nucleotide sequence ID" value="XM_017353139.3"/>
</dbReference>
<dbReference type="BMRB" id="Q1LWV4"/>
<dbReference type="SMR" id="Q1LWV4"/>
<dbReference type="FunCoup" id="Q1LWV4">
    <property type="interactions" value="291"/>
</dbReference>
<dbReference type="STRING" id="7955.ENSDARP00000054806"/>
<dbReference type="PaxDb" id="7955-ENSDARP00000054806"/>
<dbReference type="Ensembl" id="ENSDART00000054807">
    <property type="protein sequence ID" value="ENSDARP00000054806"/>
    <property type="gene ID" value="ENSDARG00000056979"/>
</dbReference>
<dbReference type="GeneID" id="550405"/>
<dbReference type="KEGG" id="dre:550405"/>
<dbReference type="AGR" id="ZFIN:ZDB-GENE-050417-210"/>
<dbReference type="CTD" id="56956"/>
<dbReference type="ZFIN" id="ZDB-GENE-050417-210">
    <property type="gene designation" value="lhx9"/>
</dbReference>
<dbReference type="eggNOG" id="KOG0490">
    <property type="taxonomic scope" value="Eukaryota"/>
</dbReference>
<dbReference type="HOGENOM" id="CLU_027802_4_1_1"/>
<dbReference type="InParanoid" id="Q1LWV4"/>
<dbReference type="OMA" id="LICCECK"/>
<dbReference type="OrthoDB" id="9990008at2759"/>
<dbReference type="PhylomeDB" id="Q1LWV4"/>
<dbReference type="TreeFam" id="TF315442"/>
<dbReference type="PRO" id="PR:Q1LWV4"/>
<dbReference type="Proteomes" id="UP000000437">
    <property type="component" value="Chromosome 22"/>
</dbReference>
<dbReference type="Bgee" id="ENSDARG00000056979">
    <property type="expression patterns" value="Expressed in brain and 26 other cell types or tissues"/>
</dbReference>
<dbReference type="ExpressionAtlas" id="Q1LWV4">
    <property type="expression patterns" value="baseline and differential"/>
</dbReference>
<dbReference type="GO" id="GO:0005634">
    <property type="term" value="C:nucleus"/>
    <property type="evidence" value="ECO:0000318"/>
    <property type="project" value="GO_Central"/>
</dbReference>
<dbReference type="GO" id="GO:0000981">
    <property type="term" value="F:DNA-binding transcription factor activity, RNA polymerase II-specific"/>
    <property type="evidence" value="ECO:0000318"/>
    <property type="project" value="GO_Central"/>
</dbReference>
<dbReference type="GO" id="GO:0046872">
    <property type="term" value="F:metal ion binding"/>
    <property type="evidence" value="ECO:0007669"/>
    <property type="project" value="UniProtKB-KW"/>
</dbReference>
<dbReference type="GO" id="GO:0000977">
    <property type="term" value="F:RNA polymerase II transcription regulatory region sequence-specific DNA binding"/>
    <property type="evidence" value="ECO:0000318"/>
    <property type="project" value="GO_Central"/>
</dbReference>
<dbReference type="GO" id="GO:0097380">
    <property type="term" value="P:dorsal spinal cord interneuron anterior axon guidance"/>
    <property type="evidence" value="ECO:0000250"/>
    <property type="project" value="UniProtKB"/>
</dbReference>
<dbReference type="GO" id="GO:0045892">
    <property type="term" value="P:negative regulation of DNA-templated transcription"/>
    <property type="evidence" value="ECO:0000250"/>
    <property type="project" value="UniProtKB"/>
</dbReference>
<dbReference type="GO" id="GO:0030182">
    <property type="term" value="P:neuron differentiation"/>
    <property type="evidence" value="ECO:0000318"/>
    <property type="project" value="GO_Central"/>
</dbReference>
<dbReference type="GO" id="GO:0048665">
    <property type="term" value="P:neuron fate specification"/>
    <property type="evidence" value="ECO:0000315"/>
    <property type="project" value="ZFIN"/>
</dbReference>
<dbReference type="GO" id="GO:0006357">
    <property type="term" value="P:regulation of transcription by RNA polymerase II"/>
    <property type="evidence" value="ECO:0000318"/>
    <property type="project" value="GO_Central"/>
</dbReference>
<dbReference type="GO" id="GO:0021794">
    <property type="term" value="P:thalamus development"/>
    <property type="evidence" value="ECO:0000316"/>
    <property type="project" value="ZFIN"/>
</dbReference>
<dbReference type="CDD" id="cd00086">
    <property type="entry name" value="homeodomain"/>
    <property type="match status" value="1"/>
</dbReference>
<dbReference type="CDD" id="cd09469">
    <property type="entry name" value="LIM1_Lhx2"/>
    <property type="match status" value="1"/>
</dbReference>
<dbReference type="CDD" id="cd09377">
    <property type="entry name" value="LIM2_Lhx2_Lhx9"/>
    <property type="match status" value="1"/>
</dbReference>
<dbReference type="FunFam" id="1.10.10.60:FF:000027">
    <property type="entry name" value="LIM/homeobox protein Lhx9"/>
    <property type="match status" value="1"/>
</dbReference>
<dbReference type="FunFam" id="2.10.110.10:FF:000039">
    <property type="entry name" value="LIM/homeobox protein Lhx9 isoform 2"/>
    <property type="match status" value="1"/>
</dbReference>
<dbReference type="FunFam" id="2.10.110.10:FF:000033">
    <property type="entry name" value="LIM/homeobox protein Lhx9 isoform X2"/>
    <property type="match status" value="1"/>
</dbReference>
<dbReference type="Gene3D" id="2.10.110.10">
    <property type="entry name" value="Cysteine Rich Protein"/>
    <property type="match status" value="2"/>
</dbReference>
<dbReference type="Gene3D" id="1.10.10.60">
    <property type="entry name" value="Homeodomain-like"/>
    <property type="match status" value="1"/>
</dbReference>
<dbReference type="InterPro" id="IPR001356">
    <property type="entry name" value="HD"/>
</dbReference>
<dbReference type="InterPro" id="IPR017970">
    <property type="entry name" value="Homeobox_CS"/>
</dbReference>
<dbReference type="InterPro" id="IPR009057">
    <property type="entry name" value="Homeodomain-like_sf"/>
</dbReference>
<dbReference type="InterPro" id="IPR050453">
    <property type="entry name" value="LIM_Homeobox_TF"/>
</dbReference>
<dbReference type="InterPro" id="IPR001781">
    <property type="entry name" value="Znf_LIM"/>
</dbReference>
<dbReference type="PANTHER" id="PTHR24208">
    <property type="entry name" value="LIM/HOMEOBOX PROTEIN LHX"/>
    <property type="match status" value="1"/>
</dbReference>
<dbReference type="PANTHER" id="PTHR24208:SF95">
    <property type="entry name" value="LIM_HOMEOBOX PROTEIN LHX9"/>
    <property type="match status" value="1"/>
</dbReference>
<dbReference type="Pfam" id="PF00046">
    <property type="entry name" value="Homeodomain"/>
    <property type="match status" value="1"/>
</dbReference>
<dbReference type="Pfam" id="PF00412">
    <property type="entry name" value="LIM"/>
    <property type="match status" value="2"/>
</dbReference>
<dbReference type="SMART" id="SM00389">
    <property type="entry name" value="HOX"/>
    <property type="match status" value="1"/>
</dbReference>
<dbReference type="SMART" id="SM00132">
    <property type="entry name" value="LIM"/>
    <property type="match status" value="2"/>
</dbReference>
<dbReference type="SUPFAM" id="SSF57716">
    <property type="entry name" value="Glucocorticoid receptor-like (DNA-binding domain)"/>
    <property type="match status" value="2"/>
</dbReference>
<dbReference type="SUPFAM" id="SSF46689">
    <property type="entry name" value="Homeodomain-like"/>
    <property type="match status" value="1"/>
</dbReference>
<dbReference type="PROSITE" id="PS00027">
    <property type="entry name" value="HOMEOBOX_1"/>
    <property type="match status" value="1"/>
</dbReference>
<dbReference type="PROSITE" id="PS50071">
    <property type="entry name" value="HOMEOBOX_2"/>
    <property type="match status" value="1"/>
</dbReference>
<dbReference type="PROSITE" id="PS00478">
    <property type="entry name" value="LIM_DOMAIN_1"/>
    <property type="match status" value="2"/>
</dbReference>
<dbReference type="PROSITE" id="PS50023">
    <property type="entry name" value="LIM_DOMAIN_2"/>
    <property type="match status" value="2"/>
</dbReference>
<feature type="chain" id="PRO_0000364231" description="LIM/homeobox protein Lhx9">
    <location>
        <begin position="1"/>
        <end position="396"/>
    </location>
</feature>
<feature type="domain" description="LIM zinc-binding 1" evidence="3">
    <location>
        <begin position="69"/>
        <end position="130"/>
    </location>
</feature>
<feature type="domain" description="LIM zinc-binding 2" evidence="3">
    <location>
        <begin position="131"/>
        <end position="193"/>
    </location>
</feature>
<feature type="DNA-binding region" description="Homeobox" evidence="2">
    <location>
        <begin position="267"/>
        <end position="326"/>
    </location>
</feature>
<feature type="region of interest" description="Disordered" evidence="4">
    <location>
        <begin position="248"/>
        <end position="272"/>
    </location>
</feature>
<feature type="region of interest" description="Disordered" evidence="4">
    <location>
        <begin position="328"/>
        <end position="365"/>
    </location>
</feature>
<feature type="region of interest" description="Disordered" evidence="4">
    <location>
        <begin position="377"/>
        <end position="396"/>
    </location>
</feature>
<feature type="compositionally biased region" description="Low complexity" evidence="4">
    <location>
        <begin position="352"/>
        <end position="365"/>
    </location>
</feature>
<feature type="compositionally biased region" description="Polar residues" evidence="4">
    <location>
        <begin position="384"/>
        <end position="396"/>
    </location>
</feature>
<feature type="sequence conflict" description="In Ref. 1; BAE45355." evidence="6" ref="1">
    <original>Q</original>
    <variation>E</variation>
    <location>
        <position position="31"/>
    </location>
</feature>
<feature type="sequence conflict" description="In Ref. 1; BAE45355." evidence="6" ref="1">
    <original>E</original>
    <variation>A</variation>
    <location>
        <position position="35"/>
    </location>
</feature>
<feature type="sequence conflict" description="In Ref. 1; BAE45355." evidence="6" ref="1">
    <original>L</original>
    <variation>H</variation>
    <location>
        <position position="85"/>
    </location>
</feature>
<feature type="sequence conflict" description="In Ref. 1; BAE45355." evidence="6" ref="1">
    <original>R</original>
    <variation>H</variation>
    <location>
        <position position="135"/>
    </location>
</feature>
<feature type="sequence conflict" description="In Ref. 1; BAE45355." evidence="6" ref="1">
    <original>G</original>
    <variation>A</variation>
    <location>
        <position position="208"/>
    </location>
</feature>
<feature type="sequence conflict" description="In Ref. 1; BAE45355." evidence="6" ref="1">
    <original>VQ</original>
    <variation>R</variation>
    <location>
        <begin position="222"/>
        <end position="223"/>
    </location>
</feature>
<feature type="sequence conflict" description="In Ref. 1; BAE45355." evidence="6" ref="1">
    <original>S</original>
    <variation>L</variation>
    <location>
        <position position="341"/>
    </location>
</feature>
<keyword id="KW-0238">DNA-binding</keyword>
<keyword id="KW-0371">Homeobox</keyword>
<keyword id="KW-0440">LIM domain</keyword>
<keyword id="KW-0479">Metal-binding</keyword>
<keyword id="KW-0539">Nucleus</keyword>
<keyword id="KW-1185">Reference proteome</keyword>
<keyword id="KW-0677">Repeat</keyword>
<keyword id="KW-0862">Zinc</keyword>
<comment type="function">
    <text evidence="1">May be involved in gonadal development.</text>
</comment>
<comment type="subcellular location">
    <subcellularLocation>
        <location evidence="2">Nucleus</location>
    </subcellularLocation>
</comment>
<comment type="developmental stage">
    <text evidence="5">Expression starts 11 hours post-fertilization (hpf) in the presumptive forebrain and becomes restricted to specific clusters of cells in the telencephalon and diencephalon at 24 hpf. Expressed in the neurons of the postoptic commissure at 30 hpf.</text>
</comment>
<name>LHX9_DANRE</name>
<organism>
    <name type="scientific">Danio rerio</name>
    <name type="common">Zebrafish</name>
    <name type="synonym">Brachydanio rerio</name>
    <dbReference type="NCBI Taxonomy" id="7955"/>
    <lineage>
        <taxon>Eukaryota</taxon>
        <taxon>Metazoa</taxon>
        <taxon>Chordata</taxon>
        <taxon>Craniata</taxon>
        <taxon>Vertebrata</taxon>
        <taxon>Euteleostomi</taxon>
        <taxon>Actinopterygii</taxon>
        <taxon>Neopterygii</taxon>
        <taxon>Teleostei</taxon>
        <taxon>Ostariophysi</taxon>
        <taxon>Cypriniformes</taxon>
        <taxon>Danionidae</taxon>
        <taxon>Danioninae</taxon>
        <taxon>Danio</taxon>
    </lineage>
</organism>
<protein>
    <recommendedName>
        <fullName>LIM/homeobox protein Lhx9</fullName>
        <shortName>LIM homeobox protein 9</shortName>
    </recommendedName>
</protein>
<gene>
    <name type="primary">lhx9</name>
</gene>
<accession>Q1LWV4</accession>
<accession>Q3LHM3</accession>
<evidence type="ECO:0000250" key="1"/>
<evidence type="ECO:0000255" key="2">
    <source>
        <dbReference type="PROSITE-ProRule" id="PRU00108"/>
    </source>
</evidence>
<evidence type="ECO:0000255" key="3">
    <source>
        <dbReference type="PROSITE-ProRule" id="PRU00125"/>
    </source>
</evidence>
<evidence type="ECO:0000256" key="4">
    <source>
        <dbReference type="SAM" id="MobiDB-lite"/>
    </source>
</evidence>
<evidence type="ECO:0000269" key="5">
    <source>
    </source>
</evidence>
<evidence type="ECO:0000305" key="6"/>
<proteinExistence type="evidence at transcript level"/>
<reference key="1">
    <citation type="journal article" date="2005" name="Dev. Biol.">
        <title>Lhx2 mediates the activity of Six3 in zebrafish forebrain growth.</title>
        <authorList>
            <person name="Ando H."/>
            <person name="Kobayashi M."/>
            <person name="Tsubokawa T."/>
            <person name="Uyemura K."/>
            <person name="Furuta T."/>
            <person name="Okamoto H."/>
        </authorList>
    </citation>
    <scope>NUCLEOTIDE SEQUENCE [MRNA]</scope>
    <scope>DEVELOPMENTAL STAGE</scope>
</reference>
<reference key="2">
    <citation type="journal article" date="2013" name="Nature">
        <title>The zebrafish reference genome sequence and its relationship to the human genome.</title>
        <authorList>
            <person name="Howe K."/>
            <person name="Clark M.D."/>
            <person name="Torroja C.F."/>
            <person name="Torrance J."/>
            <person name="Berthelot C."/>
            <person name="Muffato M."/>
            <person name="Collins J.E."/>
            <person name="Humphray S."/>
            <person name="McLaren K."/>
            <person name="Matthews L."/>
            <person name="McLaren S."/>
            <person name="Sealy I."/>
            <person name="Caccamo M."/>
            <person name="Churcher C."/>
            <person name="Scott C."/>
            <person name="Barrett J.C."/>
            <person name="Koch R."/>
            <person name="Rauch G.J."/>
            <person name="White S."/>
            <person name="Chow W."/>
            <person name="Kilian B."/>
            <person name="Quintais L.T."/>
            <person name="Guerra-Assuncao J.A."/>
            <person name="Zhou Y."/>
            <person name="Gu Y."/>
            <person name="Yen J."/>
            <person name="Vogel J.H."/>
            <person name="Eyre T."/>
            <person name="Redmond S."/>
            <person name="Banerjee R."/>
            <person name="Chi J."/>
            <person name="Fu B."/>
            <person name="Langley E."/>
            <person name="Maguire S.F."/>
            <person name="Laird G.K."/>
            <person name="Lloyd D."/>
            <person name="Kenyon E."/>
            <person name="Donaldson S."/>
            <person name="Sehra H."/>
            <person name="Almeida-King J."/>
            <person name="Loveland J."/>
            <person name="Trevanion S."/>
            <person name="Jones M."/>
            <person name="Quail M."/>
            <person name="Willey D."/>
            <person name="Hunt A."/>
            <person name="Burton J."/>
            <person name="Sims S."/>
            <person name="McLay K."/>
            <person name="Plumb B."/>
            <person name="Davis J."/>
            <person name="Clee C."/>
            <person name="Oliver K."/>
            <person name="Clark R."/>
            <person name="Riddle C."/>
            <person name="Elliot D."/>
            <person name="Threadgold G."/>
            <person name="Harden G."/>
            <person name="Ware D."/>
            <person name="Begum S."/>
            <person name="Mortimore B."/>
            <person name="Kerry G."/>
            <person name="Heath P."/>
            <person name="Phillimore B."/>
            <person name="Tracey A."/>
            <person name="Corby N."/>
            <person name="Dunn M."/>
            <person name="Johnson C."/>
            <person name="Wood J."/>
            <person name="Clark S."/>
            <person name="Pelan S."/>
            <person name="Griffiths G."/>
            <person name="Smith M."/>
            <person name="Glithero R."/>
            <person name="Howden P."/>
            <person name="Barker N."/>
            <person name="Lloyd C."/>
            <person name="Stevens C."/>
            <person name="Harley J."/>
            <person name="Holt K."/>
            <person name="Panagiotidis G."/>
            <person name="Lovell J."/>
            <person name="Beasley H."/>
            <person name="Henderson C."/>
            <person name="Gordon D."/>
            <person name="Auger K."/>
            <person name="Wright D."/>
            <person name="Collins J."/>
            <person name="Raisen C."/>
            <person name="Dyer L."/>
            <person name="Leung K."/>
            <person name="Robertson L."/>
            <person name="Ambridge K."/>
            <person name="Leongamornlert D."/>
            <person name="McGuire S."/>
            <person name="Gilderthorp R."/>
            <person name="Griffiths C."/>
            <person name="Manthravadi D."/>
            <person name="Nichol S."/>
            <person name="Barker G."/>
            <person name="Whitehead S."/>
            <person name="Kay M."/>
            <person name="Brown J."/>
            <person name="Murnane C."/>
            <person name="Gray E."/>
            <person name="Humphries M."/>
            <person name="Sycamore N."/>
            <person name="Barker D."/>
            <person name="Saunders D."/>
            <person name="Wallis J."/>
            <person name="Babbage A."/>
            <person name="Hammond S."/>
            <person name="Mashreghi-Mohammadi M."/>
            <person name="Barr L."/>
            <person name="Martin S."/>
            <person name="Wray P."/>
            <person name="Ellington A."/>
            <person name="Matthews N."/>
            <person name="Ellwood M."/>
            <person name="Woodmansey R."/>
            <person name="Clark G."/>
            <person name="Cooper J."/>
            <person name="Tromans A."/>
            <person name="Grafham D."/>
            <person name="Skuce C."/>
            <person name="Pandian R."/>
            <person name="Andrews R."/>
            <person name="Harrison E."/>
            <person name="Kimberley A."/>
            <person name="Garnett J."/>
            <person name="Fosker N."/>
            <person name="Hall R."/>
            <person name="Garner P."/>
            <person name="Kelly D."/>
            <person name="Bird C."/>
            <person name="Palmer S."/>
            <person name="Gehring I."/>
            <person name="Berger A."/>
            <person name="Dooley C.M."/>
            <person name="Ersan-Urun Z."/>
            <person name="Eser C."/>
            <person name="Geiger H."/>
            <person name="Geisler M."/>
            <person name="Karotki L."/>
            <person name="Kirn A."/>
            <person name="Konantz J."/>
            <person name="Konantz M."/>
            <person name="Oberlander M."/>
            <person name="Rudolph-Geiger S."/>
            <person name="Teucke M."/>
            <person name="Lanz C."/>
            <person name="Raddatz G."/>
            <person name="Osoegawa K."/>
            <person name="Zhu B."/>
            <person name="Rapp A."/>
            <person name="Widaa S."/>
            <person name="Langford C."/>
            <person name="Yang F."/>
            <person name="Schuster S.C."/>
            <person name="Carter N.P."/>
            <person name="Harrow J."/>
            <person name="Ning Z."/>
            <person name="Herrero J."/>
            <person name="Searle S.M."/>
            <person name="Enright A."/>
            <person name="Geisler R."/>
            <person name="Plasterk R.H."/>
            <person name="Lee C."/>
            <person name="Westerfield M."/>
            <person name="de Jong P.J."/>
            <person name="Zon L.I."/>
            <person name="Postlethwait J.H."/>
            <person name="Nusslein-Volhard C."/>
            <person name="Hubbard T.J."/>
            <person name="Roest Crollius H."/>
            <person name="Rogers J."/>
            <person name="Stemple D.L."/>
        </authorList>
    </citation>
    <scope>NUCLEOTIDE SEQUENCE [LARGE SCALE GENOMIC DNA]</scope>
    <source>
        <strain>Tuebingen</strain>
    </source>
</reference>
<reference key="3">
    <citation type="submission" date="2008-04" db="EMBL/GenBank/DDBJ databases">
        <authorList>
            <consortium name="NIH - Zebrafish Gene Collection (ZGC) project"/>
        </authorList>
    </citation>
    <scope>NUCLEOTIDE SEQUENCE [LARGE SCALE MRNA]</scope>
</reference>
<sequence length="396" mass="44020">MEVVGCKAKESSCTLRPAAMLFHGISGDHIQGIMEEMERRSKSESRLAKTVQMNGRETTMPSMSPEKPALCAGCGGKISDRYYLLAVDKQWHLRCLKCCECKLALESELTCFAKDGSIYCKEDYYRRFSVQRCARCHLGISASEMVMRARDSVYHLSCFTCTTCNKTLTTGDHFGMKDNLVYCRVHFETLIQGEYHPQLNYAELAAKGGGLALPYFNGTGTVQKGRPRKRKSPAMGIDIGSYSSGCNENDADHLDRDQQPYPPSQKTKRMRTSFKHHQLRTMKSYFAINHNPDAKDLKQLAQKTGLTKRVLQVWFQNARAKFRRNVLRQENGGVDKADGTSLPPPSSDSGALTPPSTATTLTDLTNPSITVVTSVTSSLDSHESGSPPQTTLTNLF</sequence>